<reference key="1">
    <citation type="journal article" date="2012" name="PLoS Pathog.">
        <title>ChLae1 and ChVel1 regulate T-toxin production, virulence, oxidative stress response, and development of the maize pathogen Cochliobolus heterostrophus.</title>
        <authorList>
            <person name="Wu D."/>
            <person name="Oide S."/>
            <person name="Zhang N."/>
            <person name="Choi M.Y."/>
            <person name="Turgeon B.G."/>
        </authorList>
    </citation>
    <scope>NUCLEOTIDE SEQUENCE [GENOMIC DNA]</scope>
    <scope>FUNCTION</scope>
    <scope>DISRUPTION PHENOTYPE</scope>
    <source>
        <strain>C5 / ATCC 48332 / race O</strain>
    </source>
</reference>
<reference key="2">
    <citation type="journal article" date="2012" name="PLoS Pathog.">
        <title>Diverse lifestyles and strategies of plant pathogenesis encoded in the genomes of eighteen Dothideomycetes fungi.</title>
        <authorList>
            <person name="Ohm R.A."/>
            <person name="Feau N."/>
            <person name="Henrissat B."/>
            <person name="Schoch C.L."/>
            <person name="Horwitz B.A."/>
            <person name="Barry K.W."/>
            <person name="Condon B.J."/>
            <person name="Copeland A.C."/>
            <person name="Dhillon B."/>
            <person name="Glaser F."/>
            <person name="Hesse C.N."/>
            <person name="Kosti I."/>
            <person name="LaButti K."/>
            <person name="Lindquist E.A."/>
            <person name="Lucas S."/>
            <person name="Salamov A.A."/>
            <person name="Bradshaw R.E."/>
            <person name="Ciuffetti L."/>
            <person name="Hamelin R.C."/>
            <person name="Kema G.H.J."/>
            <person name="Lawrence C."/>
            <person name="Scott J.A."/>
            <person name="Spatafora J.W."/>
            <person name="Turgeon B.G."/>
            <person name="de Wit P.J.G.M."/>
            <person name="Zhong S."/>
            <person name="Goodwin S.B."/>
            <person name="Grigoriev I.V."/>
        </authorList>
    </citation>
    <scope>NUCLEOTIDE SEQUENCE [LARGE SCALE GENOMIC DNA]</scope>
    <source>
        <strain>C5 / ATCC 48332 / race O</strain>
    </source>
</reference>
<reference key="3">
    <citation type="journal article" date="2013" name="PLoS Genet.">
        <title>Comparative genome structure, secondary metabolite, and effector coding capacity across Cochliobolus pathogens.</title>
        <authorList>
            <person name="Condon B.J."/>
            <person name="Leng Y."/>
            <person name="Wu D."/>
            <person name="Bushley K.E."/>
            <person name="Ohm R.A."/>
            <person name="Otillar R."/>
            <person name="Martin J."/>
            <person name="Schackwitz W."/>
            <person name="Grimwood J."/>
            <person name="MohdZainudin N."/>
            <person name="Xue C."/>
            <person name="Wang R."/>
            <person name="Manning V.A."/>
            <person name="Dhillon B."/>
            <person name="Tu Z.J."/>
            <person name="Steffenson B.J."/>
            <person name="Salamov A."/>
            <person name="Sun H."/>
            <person name="Lowry S."/>
            <person name="LaButti K."/>
            <person name="Han J."/>
            <person name="Copeland A."/>
            <person name="Lindquist E."/>
            <person name="Barry K."/>
            <person name="Schmutz J."/>
            <person name="Baker S.E."/>
            <person name="Ciuffetti L.M."/>
            <person name="Grigoriev I.V."/>
            <person name="Zhong S."/>
            <person name="Turgeon B.G."/>
        </authorList>
    </citation>
    <scope>NUCLEOTIDE SEQUENCE [LARGE SCALE GENOMIC DNA]</scope>
    <source>
        <strain evidence="5">C5 / ATCC 48332 / race O</strain>
    </source>
</reference>
<feature type="chain" id="PRO_0000435748" description="Secondary metabolism regulator LAE1">
    <location>
        <begin position="1"/>
        <end position="307"/>
    </location>
</feature>
<proteinExistence type="inferred from homology"/>
<comment type="function">
    <text evidence="1 2">Methyltransferase that performs automethylation (By similarity). No other methyl-accepting substrate has been identified yet (By similarity). Component of the velvet transcription factor complex that acts as a global regulator for secondary metabolite gene expression (By similarity). Controls the expression of the T-toxin gene cluster (PubMed:22383877). Promotes oxidative stress tolerance and acts as a virulence factors during infection (PubMed:22383877). Negatively regulate mycelial pigmentation and controls sexual development, as well as asexual development during vegetative growth (PubMed:22383877).</text>
</comment>
<comment type="catalytic activity">
    <reaction evidence="1">
        <text>L-methionyl-[protein] + S-adenosyl-L-methionine = S-methyl-L-methionyl-[protein] + S-adenosyl-L-homocysteine</text>
        <dbReference type="Rhea" id="RHEA:60560"/>
        <dbReference type="Rhea" id="RHEA-COMP:12313"/>
        <dbReference type="Rhea" id="RHEA-COMP:15592"/>
        <dbReference type="ChEBI" id="CHEBI:16044"/>
        <dbReference type="ChEBI" id="CHEBI:57856"/>
        <dbReference type="ChEBI" id="CHEBI:59789"/>
        <dbReference type="ChEBI" id="CHEBI:142742"/>
    </reaction>
    <physiologicalReaction direction="left-to-right" evidence="1">
        <dbReference type="Rhea" id="RHEA:60561"/>
    </physiologicalReaction>
</comment>
<comment type="subunit">
    <text evidence="1">Component of the heterotrimeric velvet complex composed of LAE1, VEL1 and VEL2; VEL1 acting as a bridging protein between LAE1 and VEL2 (By similarity).</text>
</comment>
<comment type="subcellular location">
    <subcellularLocation>
        <location evidence="1">Nucleus</location>
    </subcellularLocation>
</comment>
<comment type="disruption phenotype">
    <text evidence="2">Leads to hypersensitivity to oxidative stress, compromised reproductive development, repression of asexual sporulation, and reduction of virulence during maize infection (PubMed:22383877).</text>
</comment>
<comment type="similarity">
    <text evidence="4">Belongs to the methyltransferase superfamily. LaeA methyltransferase family.</text>
</comment>
<comment type="sequence caution" evidence="4">
    <conflict type="erroneous gene model prediction">
        <sequence resource="EMBL-CDS" id="AEP40318"/>
    </conflict>
</comment>
<gene>
    <name evidence="3" type="primary">LAE1</name>
    <name type="ORF">COCHEDRAFT_1197809</name>
</gene>
<keyword id="KW-0489">Methyltransferase</keyword>
<keyword id="KW-0539">Nucleus</keyword>
<keyword id="KW-1185">Reference proteome</keyword>
<keyword id="KW-0949">S-adenosyl-L-methionine</keyword>
<keyword id="KW-0749">Sporulation</keyword>
<keyword id="KW-0804">Transcription</keyword>
<keyword id="KW-0805">Transcription regulation</keyword>
<keyword id="KW-0808">Transferase</keyword>
<keyword id="KW-0843">Virulence</keyword>
<dbReference type="EC" id="2.1.1.-" evidence="1"/>
<dbReference type="EMBL" id="JF826792">
    <property type="protein sequence ID" value="AEP40318.1"/>
    <property type="status" value="ALT_SEQ"/>
    <property type="molecule type" value="Genomic_DNA"/>
</dbReference>
<dbReference type="EMBL" id="KB445583">
    <property type="protein sequence ID" value="EMD86920.1"/>
    <property type="molecule type" value="Genomic_DNA"/>
</dbReference>
<dbReference type="SMR" id="M2SNN6"/>
<dbReference type="STRING" id="701091.M2SNN6"/>
<dbReference type="eggNOG" id="ENOG502QQMC">
    <property type="taxonomic scope" value="Eukaryota"/>
</dbReference>
<dbReference type="HOGENOM" id="CLU_010595_2_0_1"/>
<dbReference type="OMA" id="CDFYAPF"/>
<dbReference type="OrthoDB" id="76at28556"/>
<dbReference type="PHI-base" id="PHI:2315"/>
<dbReference type="Proteomes" id="UP000016936">
    <property type="component" value="Unassembled WGS sequence"/>
</dbReference>
<dbReference type="GO" id="GO:0005634">
    <property type="term" value="C:nucleus"/>
    <property type="evidence" value="ECO:0007669"/>
    <property type="project" value="UniProtKB-SubCell"/>
</dbReference>
<dbReference type="GO" id="GO:0008168">
    <property type="term" value="F:methyltransferase activity"/>
    <property type="evidence" value="ECO:0007669"/>
    <property type="project" value="UniProtKB-KW"/>
</dbReference>
<dbReference type="GO" id="GO:0032259">
    <property type="term" value="P:methylation"/>
    <property type="evidence" value="ECO:0007669"/>
    <property type="project" value="UniProtKB-KW"/>
</dbReference>
<dbReference type="GO" id="GO:0030435">
    <property type="term" value="P:sporulation resulting in formation of a cellular spore"/>
    <property type="evidence" value="ECO:0007669"/>
    <property type="project" value="UniProtKB-KW"/>
</dbReference>
<dbReference type="CDD" id="cd02440">
    <property type="entry name" value="AdoMet_MTases"/>
    <property type="match status" value="1"/>
</dbReference>
<dbReference type="Gene3D" id="3.40.50.150">
    <property type="entry name" value="Vaccinia Virus protein VP39"/>
    <property type="match status" value="1"/>
</dbReference>
<dbReference type="InterPro" id="IPR029063">
    <property type="entry name" value="SAM-dependent_MTases_sf"/>
</dbReference>
<dbReference type="PANTHER" id="PTHR43591">
    <property type="entry name" value="METHYLTRANSFERASE"/>
    <property type="match status" value="1"/>
</dbReference>
<dbReference type="PANTHER" id="PTHR43591:SF30">
    <property type="entry name" value="PROTEIN-METHIONINE METHYLTRANSFERASE LAEA"/>
    <property type="match status" value="1"/>
</dbReference>
<dbReference type="Pfam" id="PF13489">
    <property type="entry name" value="Methyltransf_23"/>
    <property type="match status" value="1"/>
</dbReference>
<dbReference type="SUPFAM" id="SSF53335">
    <property type="entry name" value="S-adenosyl-L-methionine-dependent methyltransferases"/>
    <property type="match status" value="1"/>
</dbReference>
<protein>
    <recommendedName>
        <fullName evidence="4">Secondary metabolism regulator LAE1</fullName>
    </recommendedName>
    <alternativeName>
        <fullName evidence="4">Methyltransferase LAE1</fullName>
        <ecNumber evidence="1">2.1.1.-</ecNumber>
    </alternativeName>
    <alternativeName>
        <fullName evidence="4">Velvet complex subunit LAE1</fullName>
    </alternativeName>
</protein>
<evidence type="ECO:0000250" key="1">
    <source>
        <dbReference type="UniProtKB" id="C8VQG9"/>
    </source>
</evidence>
<evidence type="ECO:0000269" key="2">
    <source>
    </source>
</evidence>
<evidence type="ECO:0000303" key="3">
    <source>
    </source>
</evidence>
<evidence type="ECO:0000305" key="4"/>
<evidence type="ECO:0000312" key="5">
    <source>
        <dbReference type="Proteomes" id="UP000016936"/>
    </source>
</evidence>
<sequence>MTSNGLPVPAQNSNYMENGRWYHGFRRGLYMYPCDEPEKDRMDIYHQFFAVARRGQLHQAPVPSEPHLQPRILDVGCGTGIWAIDMADKYLNAEVLGLDLVNIQPEKIPPNLRFRVPRDYESPWTLGEDSWDLIHLRMACGSVESWPELYQKIYTHLKPGTGWIEHIEIDMEPRCDDYTLPPDSMLRKWYGWLADATQRAYRPIAYEHRTRQLLQAAGFIDIQETVIRVPYNTWPNDPHQKDIGRWYNLGLTEGLEALTFAPLTRVYHWDLNAHVRPIVEGVRRELCNRKIHAYNNIHIWTARRPQQ</sequence>
<accession>M2SNN6</accession>
<accession>G4XKY9</accession>
<name>LAEA_COCH5</name>
<organism>
    <name type="scientific">Cochliobolus heterostrophus (strain C5 / ATCC 48332 / race O)</name>
    <name type="common">Southern corn leaf blight fungus</name>
    <name type="synonym">Bipolaris maydis</name>
    <dbReference type="NCBI Taxonomy" id="701091"/>
    <lineage>
        <taxon>Eukaryota</taxon>
        <taxon>Fungi</taxon>
        <taxon>Dikarya</taxon>
        <taxon>Ascomycota</taxon>
        <taxon>Pezizomycotina</taxon>
        <taxon>Dothideomycetes</taxon>
        <taxon>Pleosporomycetidae</taxon>
        <taxon>Pleosporales</taxon>
        <taxon>Pleosporineae</taxon>
        <taxon>Pleosporaceae</taxon>
        <taxon>Bipolaris</taxon>
    </lineage>
</organism>